<organism>
    <name type="scientific">Polaromonas sp. (strain JS666 / ATCC BAA-500)</name>
    <dbReference type="NCBI Taxonomy" id="296591"/>
    <lineage>
        <taxon>Bacteria</taxon>
        <taxon>Pseudomonadati</taxon>
        <taxon>Pseudomonadota</taxon>
        <taxon>Betaproteobacteria</taxon>
        <taxon>Burkholderiales</taxon>
        <taxon>Comamonadaceae</taxon>
        <taxon>Polaromonas</taxon>
    </lineage>
</organism>
<proteinExistence type="inferred from homology"/>
<keyword id="KW-1185">Reference proteome</keyword>
<keyword id="KW-0687">Ribonucleoprotein</keyword>
<keyword id="KW-0689">Ribosomal protein</keyword>
<keyword id="KW-0694">RNA-binding</keyword>
<keyword id="KW-0699">rRNA-binding</keyword>
<reference key="1">
    <citation type="journal article" date="2008" name="Appl. Environ. Microbiol.">
        <title>The genome of Polaromonas sp. strain JS666: insights into the evolution of a hydrocarbon- and xenobiotic-degrading bacterium, and features of relevance to biotechnology.</title>
        <authorList>
            <person name="Mattes T.E."/>
            <person name="Alexander A.K."/>
            <person name="Richardson P.M."/>
            <person name="Munk A.C."/>
            <person name="Han C.S."/>
            <person name="Stothard P."/>
            <person name="Coleman N.V."/>
        </authorList>
    </citation>
    <scope>NUCLEOTIDE SEQUENCE [LARGE SCALE GENOMIC DNA]</scope>
    <source>
        <strain>JS666 / ATCC BAA-500</strain>
    </source>
</reference>
<sequence>MTRSLKKGPFVDHHLVAKADKAVTNKDKKPIKTWSRRSMILPEFIGLTIAVHNGKQHVPVYITDQMVGHKLGEFALTRTFKGHPADKKVVKK</sequence>
<protein>
    <recommendedName>
        <fullName evidence="1">Small ribosomal subunit protein uS19</fullName>
    </recommendedName>
    <alternativeName>
        <fullName evidence="2">30S ribosomal protein S19</fullName>
    </alternativeName>
</protein>
<accession>Q12GW7</accession>
<feature type="chain" id="PRO_0000265397" description="Small ribosomal subunit protein uS19">
    <location>
        <begin position="1"/>
        <end position="92"/>
    </location>
</feature>
<gene>
    <name evidence="1" type="primary">rpsS</name>
    <name type="ordered locus">Bpro_0260</name>
</gene>
<name>RS19_POLSJ</name>
<dbReference type="EMBL" id="CP000316">
    <property type="protein sequence ID" value="ABE42225.1"/>
    <property type="molecule type" value="Genomic_DNA"/>
</dbReference>
<dbReference type="RefSeq" id="WP_011481233.1">
    <property type="nucleotide sequence ID" value="NC_007948.1"/>
</dbReference>
<dbReference type="SMR" id="Q12GW7"/>
<dbReference type="STRING" id="296591.Bpro_0260"/>
<dbReference type="KEGG" id="pol:Bpro_0260"/>
<dbReference type="eggNOG" id="COG0185">
    <property type="taxonomic scope" value="Bacteria"/>
</dbReference>
<dbReference type="HOGENOM" id="CLU_144911_0_1_4"/>
<dbReference type="OrthoDB" id="9797833at2"/>
<dbReference type="Proteomes" id="UP000001983">
    <property type="component" value="Chromosome"/>
</dbReference>
<dbReference type="GO" id="GO:0005737">
    <property type="term" value="C:cytoplasm"/>
    <property type="evidence" value="ECO:0007669"/>
    <property type="project" value="UniProtKB-ARBA"/>
</dbReference>
<dbReference type="GO" id="GO:0015935">
    <property type="term" value="C:small ribosomal subunit"/>
    <property type="evidence" value="ECO:0007669"/>
    <property type="project" value="InterPro"/>
</dbReference>
<dbReference type="GO" id="GO:0019843">
    <property type="term" value="F:rRNA binding"/>
    <property type="evidence" value="ECO:0007669"/>
    <property type="project" value="UniProtKB-UniRule"/>
</dbReference>
<dbReference type="GO" id="GO:0003735">
    <property type="term" value="F:structural constituent of ribosome"/>
    <property type="evidence" value="ECO:0007669"/>
    <property type="project" value="InterPro"/>
</dbReference>
<dbReference type="GO" id="GO:0000028">
    <property type="term" value="P:ribosomal small subunit assembly"/>
    <property type="evidence" value="ECO:0007669"/>
    <property type="project" value="TreeGrafter"/>
</dbReference>
<dbReference type="GO" id="GO:0006412">
    <property type="term" value="P:translation"/>
    <property type="evidence" value="ECO:0007669"/>
    <property type="project" value="UniProtKB-UniRule"/>
</dbReference>
<dbReference type="FunFam" id="3.30.860.10:FF:000001">
    <property type="entry name" value="30S ribosomal protein S19"/>
    <property type="match status" value="1"/>
</dbReference>
<dbReference type="Gene3D" id="3.30.860.10">
    <property type="entry name" value="30s Ribosomal Protein S19, Chain A"/>
    <property type="match status" value="1"/>
</dbReference>
<dbReference type="HAMAP" id="MF_00531">
    <property type="entry name" value="Ribosomal_uS19"/>
    <property type="match status" value="1"/>
</dbReference>
<dbReference type="InterPro" id="IPR002222">
    <property type="entry name" value="Ribosomal_uS19"/>
</dbReference>
<dbReference type="InterPro" id="IPR005732">
    <property type="entry name" value="Ribosomal_uS19_bac-type"/>
</dbReference>
<dbReference type="InterPro" id="IPR020934">
    <property type="entry name" value="Ribosomal_uS19_CS"/>
</dbReference>
<dbReference type="InterPro" id="IPR023575">
    <property type="entry name" value="Ribosomal_uS19_SF"/>
</dbReference>
<dbReference type="NCBIfam" id="TIGR01050">
    <property type="entry name" value="rpsS_bact"/>
    <property type="match status" value="1"/>
</dbReference>
<dbReference type="PANTHER" id="PTHR11880">
    <property type="entry name" value="RIBOSOMAL PROTEIN S19P FAMILY MEMBER"/>
    <property type="match status" value="1"/>
</dbReference>
<dbReference type="PANTHER" id="PTHR11880:SF8">
    <property type="entry name" value="SMALL RIBOSOMAL SUBUNIT PROTEIN US19M"/>
    <property type="match status" value="1"/>
</dbReference>
<dbReference type="Pfam" id="PF00203">
    <property type="entry name" value="Ribosomal_S19"/>
    <property type="match status" value="1"/>
</dbReference>
<dbReference type="PIRSF" id="PIRSF002144">
    <property type="entry name" value="Ribosomal_S19"/>
    <property type="match status" value="1"/>
</dbReference>
<dbReference type="PRINTS" id="PR00975">
    <property type="entry name" value="RIBOSOMALS19"/>
</dbReference>
<dbReference type="SUPFAM" id="SSF54570">
    <property type="entry name" value="Ribosomal protein S19"/>
    <property type="match status" value="1"/>
</dbReference>
<dbReference type="PROSITE" id="PS00323">
    <property type="entry name" value="RIBOSOMAL_S19"/>
    <property type="match status" value="1"/>
</dbReference>
<comment type="function">
    <text evidence="1">Protein S19 forms a complex with S13 that binds strongly to the 16S ribosomal RNA.</text>
</comment>
<comment type="similarity">
    <text evidence="1">Belongs to the universal ribosomal protein uS19 family.</text>
</comment>
<evidence type="ECO:0000255" key="1">
    <source>
        <dbReference type="HAMAP-Rule" id="MF_00531"/>
    </source>
</evidence>
<evidence type="ECO:0000305" key="2"/>